<dbReference type="EC" id="3.6.5.3" evidence="2"/>
<dbReference type="EMBL" id="CP000726">
    <property type="protein sequence ID" value="ABS32526.1"/>
    <property type="molecule type" value="Genomic_DNA"/>
</dbReference>
<dbReference type="EMBL" id="CP000726">
    <property type="protein sequence ID" value="ABS32980.1"/>
    <property type="molecule type" value="Genomic_DNA"/>
</dbReference>
<dbReference type="SMR" id="A7FZ71"/>
<dbReference type="KEGG" id="cba:CLB_3539"/>
<dbReference type="KEGG" id="cba:CLB_3553"/>
<dbReference type="HOGENOM" id="CLU_007265_0_0_9"/>
<dbReference type="GO" id="GO:0005829">
    <property type="term" value="C:cytosol"/>
    <property type="evidence" value="ECO:0007669"/>
    <property type="project" value="TreeGrafter"/>
</dbReference>
<dbReference type="GO" id="GO:0005525">
    <property type="term" value="F:GTP binding"/>
    <property type="evidence" value="ECO:0007669"/>
    <property type="project" value="UniProtKB-UniRule"/>
</dbReference>
<dbReference type="GO" id="GO:0003924">
    <property type="term" value="F:GTPase activity"/>
    <property type="evidence" value="ECO:0007669"/>
    <property type="project" value="InterPro"/>
</dbReference>
<dbReference type="GO" id="GO:0003746">
    <property type="term" value="F:translation elongation factor activity"/>
    <property type="evidence" value="ECO:0007669"/>
    <property type="project" value="UniProtKB-UniRule"/>
</dbReference>
<dbReference type="CDD" id="cd01884">
    <property type="entry name" value="EF_Tu"/>
    <property type="match status" value="1"/>
</dbReference>
<dbReference type="CDD" id="cd03697">
    <property type="entry name" value="EFTU_II"/>
    <property type="match status" value="1"/>
</dbReference>
<dbReference type="CDD" id="cd03707">
    <property type="entry name" value="EFTU_III"/>
    <property type="match status" value="1"/>
</dbReference>
<dbReference type="FunFam" id="2.40.30.10:FF:000001">
    <property type="entry name" value="Elongation factor Tu"/>
    <property type="match status" value="1"/>
</dbReference>
<dbReference type="FunFam" id="3.40.50.300:FF:000003">
    <property type="entry name" value="Elongation factor Tu"/>
    <property type="match status" value="1"/>
</dbReference>
<dbReference type="Gene3D" id="3.40.50.300">
    <property type="entry name" value="P-loop containing nucleotide triphosphate hydrolases"/>
    <property type="match status" value="1"/>
</dbReference>
<dbReference type="Gene3D" id="2.40.30.10">
    <property type="entry name" value="Translation factors"/>
    <property type="match status" value="2"/>
</dbReference>
<dbReference type="HAMAP" id="MF_00118_B">
    <property type="entry name" value="EF_Tu_B"/>
    <property type="match status" value="1"/>
</dbReference>
<dbReference type="InterPro" id="IPR041709">
    <property type="entry name" value="EF-Tu_GTP-bd"/>
</dbReference>
<dbReference type="InterPro" id="IPR050055">
    <property type="entry name" value="EF-Tu_GTPase"/>
</dbReference>
<dbReference type="InterPro" id="IPR004161">
    <property type="entry name" value="EFTu-like_2"/>
</dbReference>
<dbReference type="InterPro" id="IPR033720">
    <property type="entry name" value="EFTU_2"/>
</dbReference>
<dbReference type="InterPro" id="IPR031157">
    <property type="entry name" value="G_TR_CS"/>
</dbReference>
<dbReference type="InterPro" id="IPR027417">
    <property type="entry name" value="P-loop_NTPase"/>
</dbReference>
<dbReference type="InterPro" id="IPR005225">
    <property type="entry name" value="Small_GTP-bd"/>
</dbReference>
<dbReference type="InterPro" id="IPR000795">
    <property type="entry name" value="T_Tr_GTP-bd_dom"/>
</dbReference>
<dbReference type="InterPro" id="IPR009000">
    <property type="entry name" value="Transl_B-barrel_sf"/>
</dbReference>
<dbReference type="InterPro" id="IPR009001">
    <property type="entry name" value="Transl_elong_EF1A/Init_IF2_C"/>
</dbReference>
<dbReference type="InterPro" id="IPR004541">
    <property type="entry name" value="Transl_elong_EFTu/EF1A_bac/org"/>
</dbReference>
<dbReference type="InterPro" id="IPR004160">
    <property type="entry name" value="Transl_elong_EFTu/EF1A_C"/>
</dbReference>
<dbReference type="NCBIfam" id="TIGR00485">
    <property type="entry name" value="EF-Tu"/>
    <property type="match status" value="1"/>
</dbReference>
<dbReference type="NCBIfam" id="NF000766">
    <property type="entry name" value="PRK00049.1"/>
    <property type="match status" value="1"/>
</dbReference>
<dbReference type="NCBIfam" id="NF009372">
    <property type="entry name" value="PRK12735.1"/>
    <property type="match status" value="1"/>
</dbReference>
<dbReference type="NCBIfam" id="NF009373">
    <property type="entry name" value="PRK12736.1"/>
    <property type="match status" value="1"/>
</dbReference>
<dbReference type="NCBIfam" id="TIGR00231">
    <property type="entry name" value="small_GTP"/>
    <property type="match status" value="1"/>
</dbReference>
<dbReference type="PANTHER" id="PTHR43721:SF22">
    <property type="entry name" value="ELONGATION FACTOR TU, MITOCHONDRIAL"/>
    <property type="match status" value="1"/>
</dbReference>
<dbReference type="PANTHER" id="PTHR43721">
    <property type="entry name" value="ELONGATION FACTOR TU-RELATED"/>
    <property type="match status" value="1"/>
</dbReference>
<dbReference type="Pfam" id="PF00009">
    <property type="entry name" value="GTP_EFTU"/>
    <property type="match status" value="1"/>
</dbReference>
<dbReference type="Pfam" id="PF03144">
    <property type="entry name" value="GTP_EFTU_D2"/>
    <property type="match status" value="1"/>
</dbReference>
<dbReference type="Pfam" id="PF03143">
    <property type="entry name" value="GTP_EFTU_D3"/>
    <property type="match status" value="1"/>
</dbReference>
<dbReference type="PRINTS" id="PR00315">
    <property type="entry name" value="ELONGATNFCT"/>
</dbReference>
<dbReference type="SUPFAM" id="SSF50465">
    <property type="entry name" value="EF-Tu/eEF-1alpha/eIF2-gamma C-terminal domain"/>
    <property type="match status" value="1"/>
</dbReference>
<dbReference type="SUPFAM" id="SSF52540">
    <property type="entry name" value="P-loop containing nucleoside triphosphate hydrolases"/>
    <property type="match status" value="1"/>
</dbReference>
<dbReference type="SUPFAM" id="SSF50447">
    <property type="entry name" value="Translation proteins"/>
    <property type="match status" value="1"/>
</dbReference>
<dbReference type="PROSITE" id="PS00301">
    <property type="entry name" value="G_TR_1"/>
    <property type="match status" value="1"/>
</dbReference>
<dbReference type="PROSITE" id="PS51722">
    <property type="entry name" value="G_TR_2"/>
    <property type="match status" value="1"/>
</dbReference>
<reference key="1">
    <citation type="journal article" date="2007" name="PLoS ONE">
        <title>Analysis of the neurotoxin complex genes in Clostridium botulinum A1-A4 and B1 strains: BoNT/A3, /Ba4 and /B1 clusters are located within plasmids.</title>
        <authorList>
            <person name="Smith T.J."/>
            <person name="Hill K.K."/>
            <person name="Foley B.T."/>
            <person name="Detter J.C."/>
            <person name="Munk A.C."/>
            <person name="Bruce D.C."/>
            <person name="Doggett N.A."/>
            <person name="Smith L.A."/>
            <person name="Marks J.D."/>
            <person name="Xie G."/>
            <person name="Brettin T.S."/>
        </authorList>
    </citation>
    <scope>NUCLEOTIDE SEQUENCE [LARGE SCALE GENOMIC DNA]</scope>
    <source>
        <strain>ATCC 19397 / Type A</strain>
    </source>
</reference>
<gene>
    <name evidence="2" type="primary">tuf1</name>
    <name type="ordered locus">CLB_3539</name>
</gene>
<gene>
    <name evidence="2" type="primary">tuf2</name>
    <name type="ordered locus">CLB_3553</name>
</gene>
<sequence length="397" mass="43483">MAKAKFERSKPHVNIGTIGHVDHGKTTLTAAITTVLAQKGGASATKYDEIDKAPEEKERGITINTSHVEYETANRHYAHVDCPGHADYVKNMITGAAQMDGAILVVSAADGPMPQTREHILLASRVGVQYIVVFLNKADQVDDPELIELVEMEVRELLNEYGFPGDDTPIVVGSALEVLENQDNAEKTKCIDELMEAIDSYIPTPERATDQPFLMPVEDVFTITGRGTVATGRVERGVLHTGDEVELIGMKQEVSKTVCTGIEMFRKILDEAMAGDNIGALLRGIQRDEIQRGQVLAKPGSVTPHKKFVGQVYVLKKEEGGRHTPFFNGYRPQFYFRTTDVTGSINLPEGVEMVMPGDHIDMAVELITPVAMHENLRFAIREGGRTVGSGVVTTISE</sequence>
<proteinExistence type="inferred from homology"/>
<keyword id="KW-0963">Cytoplasm</keyword>
<keyword id="KW-0251">Elongation factor</keyword>
<keyword id="KW-0342">GTP-binding</keyword>
<keyword id="KW-0378">Hydrolase</keyword>
<keyword id="KW-0460">Magnesium</keyword>
<keyword id="KW-0479">Metal-binding</keyword>
<keyword id="KW-0547">Nucleotide-binding</keyword>
<keyword id="KW-0648">Protein biosynthesis</keyword>
<protein>
    <recommendedName>
        <fullName evidence="2">Elongation factor Tu</fullName>
        <shortName evidence="2">EF-Tu</shortName>
        <ecNumber evidence="2">3.6.5.3</ecNumber>
    </recommendedName>
</protein>
<accession>A7FZ71</accession>
<name>EFTU_CLOB1</name>
<evidence type="ECO:0000250" key="1"/>
<evidence type="ECO:0000255" key="2">
    <source>
        <dbReference type="HAMAP-Rule" id="MF_00118"/>
    </source>
</evidence>
<organism>
    <name type="scientific">Clostridium botulinum (strain ATCC 19397 / Type A)</name>
    <dbReference type="NCBI Taxonomy" id="441770"/>
    <lineage>
        <taxon>Bacteria</taxon>
        <taxon>Bacillati</taxon>
        <taxon>Bacillota</taxon>
        <taxon>Clostridia</taxon>
        <taxon>Eubacteriales</taxon>
        <taxon>Clostridiaceae</taxon>
        <taxon>Clostridium</taxon>
    </lineage>
</organism>
<comment type="function">
    <text evidence="2">GTP hydrolase that promotes the GTP-dependent binding of aminoacyl-tRNA to the A-site of ribosomes during protein biosynthesis.</text>
</comment>
<comment type="catalytic activity">
    <reaction evidence="2">
        <text>GTP + H2O = GDP + phosphate + H(+)</text>
        <dbReference type="Rhea" id="RHEA:19669"/>
        <dbReference type="ChEBI" id="CHEBI:15377"/>
        <dbReference type="ChEBI" id="CHEBI:15378"/>
        <dbReference type="ChEBI" id="CHEBI:37565"/>
        <dbReference type="ChEBI" id="CHEBI:43474"/>
        <dbReference type="ChEBI" id="CHEBI:58189"/>
        <dbReference type="EC" id="3.6.5.3"/>
    </reaction>
    <physiologicalReaction direction="left-to-right" evidence="2">
        <dbReference type="Rhea" id="RHEA:19670"/>
    </physiologicalReaction>
</comment>
<comment type="subunit">
    <text evidence="2">Monomer.</text>
</comment>
<comment type="subcellular location">
    <subcellularLocation>
        <location evidence="2">Cytoplasm</location>
    </subcellularLocation>
</comment>
<comment type="similarity">
    <text evidence="2">Belongs to the TRAFAC class translation factor GTPase superfamily. Classic translation factor GTPase family. EF-Tu/EF-1A subfamily.</text>
</comment>
<feature type="chain" id="PRO_0000337356" description="Elongation factor Tu">
    <location>
        <begin position="1"/>
        <end position="397"/>
    </location>
</feature>
<feature type="domain" description="tr-type G">
    <location>
        <begin position="10"/>
        <end position="206"/>
    </location>
</feature>
<feature type="region of interest" description="G1" evidence="1">
    <location>
        <begin position="19"/>
        <end position="26"/>
    </location>
</feature>
<feature type="region of interest" description="G2" evidence="1">
    <location>
        <begin position="60"/>
        <end position="64"/>
    </location>
</feature>
<feature type="region of interest" description="G3" evidence="1">
    <location>
        <begin position="81"/>
        <end position="84"/>
    </location>
</feature>
<feature type="region of interest" description="G4" evidence="1">
    <location>
        <begin position="136"/>
        <end position="139"/>
    </location>
</feature>
<feature type="region of interest" description="G5" evidence="1">
    <location>
        <begin position="174"/>
        <end position="176"/>
    </location>
</feature>
<feature type="binding site" evidence="2">
    <location>
        <begin position="19"/>
        <end position="26"/>
    </location>
    <ligand>
        <name>GTP</name>
        <dbReference type="ChEBI" id="CHEBI:37565"/>
    </ligand>
</feature>
<feature type="binding site" evidence="2">
    <location>
        <position position="26"/>
    </location>
    <ligand>
        <name>Mg(2+)</name>
        <dbReference type="ChEBI" id="CHEBI:18420"/>
    </ligand>
</feature>
<feature type="binding site" evidence="2">
    <location>
        <begin position="81"/>
        <end position="85"/>
    </location>
    <ligand>
        <name>GTP</name>
        <dbReference type="ChEBI" id="CHEBI:37565"/>
    </ligand>
</feature>
<feature type="binding site" evidence="2">
    <location>
        <begin position="136"/>
        <end position="139"/>
    </location>
    <ligand>
        <name>GTP</name>
        <dbReference type="ChEBI" id="CHEBI:37565"/>
    </ligand>
</feature>